<comment type="function">
    <text evidence="1">F(1)F(0) ATP synthase produces ATP from ADP in the presence of a proton or sodium gradient. F-type ATPases consist of two structural domains, F(1) containing the extramembraneous catalytic core and F(0) containing the membrane proton channel, linked together by a central stalk and a peripheral stalk. During catalysis, ATP synthesis in the catalytic domain of F(1) is coupled via a rotary mechanism of the central stalk subunits to proton translocation.</text>
</comment>
<comment type="function">
    <text evidence="1">This protein is part of the stalk that links CF(0) to CF(1). It either transmits conformational changes from CF(0) to CF(1) or is implicated in proton conduction.</text>
</comment>
<comment type="subunit">
    <text evidence="1">F-type ATPases have 2 components, F(1) - the catalytic core - and F(0) - the membrane proton channel. F(1) has five subunits: alpha(3), beta(3), gamma(1), delta(1), epsilon(1). F(0) has three main subunits: a(1), b(2) and c(10-14). The alpha and beta chains form an alternating ring which encloses part of the gamma chain. F(1) is attached to F(0) by a central stalk formed by the gamma and epsilon chains, while a peripheral stalk is formed by the delta and b chains.</text>
</comment>
<comment type="subcellular location">
    <subcellularLocation>
        <location evidence="1">Cell inner membrane</location>
        <topology evidence="1">Peripheral membrane protein</topology>
    </subcellularLocation>
</comment>
<comment type="similarity">
    <text evidence="1">Belongs to the ATPase delta chain family.</text>
</comment>
<accession>A5WBA6</accession>
<reference key="1">
    <citation type="submission" date="2007-05" db="EMBL/GenBank/DDBJ databases">
        <title>Complete sequence of Pseudomonas putida F1.</title>
        <authorList>
            <consortium name="US DOE Joint Genome Institute"/>
            <person name="Copeland A."/>
            <person name="Lucas S."/>
            <person name="Lapidus A."/>
            <person name="Barry K."/>
            <person name="Detter J.C."/>
            <person name="Glavina del Rio T."/>
            <person name="Hammon N."/>
            <person name="Israni S."/>
            <person name="Dalin E."/>
            <person name="Tice H."/>
            <person name="Pitluck S."/>
            <person name="Chain P."/>
            <person name="Malfatti S."/>
            <person name="Shin M."/>
            <person name="Vergez L."/>
            <person name="Schmutz J."/>
            <person name="Larimer F."/>
            <person name="Land M."/>
            <person name="Hauser L."/>
            <person name="Kyrpides N."/>
            <person name="Lykidis A."/>
            <person name="Parales R."/>
            <person name="Richardson P."/>
        </authorList>
    </citation>
    <scope>NUCLEOTIDE SEQUENCE [LARGE SCALE GENOMIC DNA]</scope>
    <source>
        <strain>ATCC 700007 / DSM 6899 / JCM 31910 / BCRC 17059 / LMG 24140 / F1</strain>
    </source>
</reference>
<feature type="chain" id="PRO_0000371074" description="ATP synthase subunit delta">
    <location>
        <begin position="1"/>
        <end position="178"/>
    </location>
</feature>
<evidence type="ECO:0000255" key="1">
    <source>
        <dbReference type="HAMAP-Rule" id="MF_01416"/>
    </source>
</evidence>
<gene>
    <name evidence="1" type="primary">atpH</name>
    <name type="ordered locus">Pput_5298</name>
</gene>
<sequence>MAELTTLARPYAKAAFEHAQAHQQLANWSAMLGLAAAVSQDDTMQRLLKAPRLTSAEKAATFIDVCGDKFNAQAQNFIHVAAENDRLLLLPEIAALFDLYKAEQEKSVDVEVTSAFALNQEQQDKLAKVLSARLGQEVRLHASEDASLIGGVVIRAGDLVIDGSVRGKIAKLAEALKS</sequence>
<organism>
    <name type="scientific">Pseudomonas putida (strain ATCC 700007 / DSM 6899 / JCM 31910 / BCRC 17059 / LMG 24140 / F1)</name>
    <dbReference type="NCBI Taxonomy" id="351746"/>
    <lineage>
        <taxon>Bacteria</taxon>
        <taxon>Pseudomonadati</taxon>
        <taxon>Pseudomonadota</taxon>
        <taxon>Gammaproteobacteria</taxon>
        <taxon>Pseudomonadales</taxon>
        <taxon>Pseudomonadaceae</taxon>
        <taxon>Pseudomonas</taxon>
    </lineage>
</organism>
<proteinExistence type="inferred from homology"/>
<dbReference type="EMBL" id="CP000712">
    <property type="protein sequence ID" value="ABQ81416.1"/>
    <property type="molecule type" value="Genomic_DNA"/>
</dbReference>
<dbReference type="SMR" id="A5WBA6"/>
<dbReference type="KEGG" id="ppf:Pput_5298"/>
<dbReference type="eggNOG" id="COG0712">
    <property type="taxonomic scope" value="Bacteria"/>
</dbReference>
<dbReference type="HOGENOM" id="CLU_085114_3_0_6"/>
<dbReference type="GO" id="GO:0005886">
    <property type="term" value="C:plasma membrane"/>
    <property type="evidence" value="ECO:0007669"/>
    <property type="project" value="UniProtKB-SubCell"/>
</dbReference>
<dbReference type="GO" id="GO:0045259">
    <property type="term" value="C:proton-transporting ATP synthase complex"/>
    <property type="evidence" value="ECO:0007669"/>
    <property type="project" value="UniProtKB-KW"/>
</dbReference>
<dbReference type="GO" id="GO:0046933">
    <property type="term" value="F:proton-transporting ATP synthase activity, rotational mechanism"/>
    <property type="evidence" value="ECO:0007669"/>
    <property type="project" value="UniProtKB-UniRule"/>
</dbReference>
<dbReference type="Gene3D" id="1.10.520.20">
    <property type="entry name" value="N-terminal domain of the delta subunit of the F1F0-ATP synthase"/>
    <property type="match status" value="1"/>
</dbReference>
<dbReference type="HAMAP" id="MF_01416">
    <property type="entry name" value="ATP_synth_delta_bact"/>
    <property type="match status" value="1"/>
</dbReference>
<dbReference type="InterPro" id="IPR026015">
    <property type="entry name" value="ATP_synth_OSCP/delta_N_sf"/>
</dbReference>
<dbReference type="InterPro" id="IPR000711">
    <property type="entry name" value="ATPase_OSCP/dsu"/>
</dbReference>
<dbReference type="NCBIfam" id="TIGR01145">
    <property type="entry name" value="ATP_synt_delta"/>
    <property type="match status" value="1"/>
</dbReference>
<dbReference type="NCBIfam" id="NF004402">
    <property type="entry name" value="PRK05758.2-2"/>
    <property type="match status" value="1"/>
</dbReference>
<dbReference type="PANTHER" id="PTHR11910">
    <property type="entry name" value="ATP SYNTHASE DELTA CHAIN"/>
    <property type="match status" value="1"/>
</dbReference>
<dbReference type="Pfam" id="PF00213">
    <property type="entry name" value="OSCP"/>
    <property type="match status" value="1"/>
</dbReference>
<dbReference type="PRINTS" id="PR00125">
    <property type="entry name" value="ATPASEDELTA"/>
</dbReference>
<dbReference type="SUPFAM" id="SSF47928">
    <property type="entry name" value="N-terminal domain of the delta subunit of the F1F0-ATP synthase"/>
    <property type="match status" value="1"/>
</dbReference>
<name>ATPD_PSEP1</name>
<keyword id="KW-0066">ATP synthesis</keyword>
<keyword id="KW-0997">Cell inner membrane</keyword>
<keyword id="KW-1003">Cell membrane</keyword>
<keyword id="KW-0139">CF(1)</keyword>
<keyword id="KW-0375">Hydrogen ion transport</keyword>
<keyword id="KW-0406">Ion transport</keyword>
<keyword id="KW-0472">Membrane</keyword>
<keyword id="KW-0813">Transport</keyword>
<protein>
    <recommendedName>
        <fullName evidence="1">ATP synthase subunit delta</fullName>
    </recommendedName>
    <alternativeName>
        <fullName evidence="1">ATP synthase F(1) sector subunit delta</fullName>
    </alternativeName>
    <alternativeName>
        <fullName evidence="1">F-type ATPase subunit delta</fullName>
        <shortName evidence="1">F-ATPase subunit delta</shortName>
    </alternativeName>
</protein>